<keyword id="KW-0325">Glycoprotein</keyword>
<keyword id="KW-0521">NADP</keyword>
<keyword id="KW-0560">Oxidoreductase</keyword>
<keyword id="KW-0608">Pigment</keyword>
<keyword id="KW-0732">Signal</keyword>
<name>PIGE_MONRU</name>
<accession>V5NZC3</accession>
<organism>
    <name type="scientific">Monascus ruber</name>
    <name type="common">Mold</name>
    <dbReference type="NCBI Taxonomy" id="89489"/>
    <lineage>
        <taxon>Eukaryota</taxon>
        <taxon>Fungi</taxon>
        <taxon>Dikarya</taxon>
        <taxon>Ascomycota</taxon>
        <taxon>Pezizomycotina</taxon>
        <taxon>Eurotiomycetes</taxon>
        <taxon>Eurotiomycetidae</taxon>
        <taxon>Eurotiales</taxon>
        <taxon>Aspergillaceae</taxon>
        <taxon>Monascus</taxon>
    </lineage>
</organism>
<sequence length="342" mass="38560">MGSISPKTRFPIVLGAGLIGSPGLFEGATVTTVKDVEALLDTFQAHGHTDVDVARIYGSGSAETLLAAADWKGRGLVVRDKLYPTKRRPMAHLGTAYTLEPADVRRGLLDCLKALNTPKLDLFILYAPDRQVPVEETLREVNKLYEEGLFSRLGISNYMAWEVVQIMELCEKNAWVKPSLYQSLYNVLHRAIEPELVPCLRAYNLPLHVGQPLCGGFLTSRYRRDMPESEHKPGSRFDPQTFHGRHHRHRYWNDAYFDVLDTIRETGRKYNLTEVQCALRWLSHHSLLRPECGDAILVCGSDPAQLEEDLLALEEPPLPEEVVQVLDEGYAKVKAVVGPYYH</sequence>
<feature type="signal peptide" evidence="2">
    <location>
        <begin position="1"/>
        <end position="27"/>
    </location>
</feature>
<feature type="chain" id="PRO_0000460213" description="Aldo-keto reductase pigE">
    <location>
        <begin position="28"/>
        <end position="342"/>
    </location>
</feature>
<feature type="active site" description="Proton donor" evidence="1">
    <location>
        <position position="57"/>
    </location>
</feature>
<feature type="binding site" evidence="1">
    <location>
        <position position="52"/>
    </location>
    <ligand>
        <name>NADP(+)</name>
        <dbReference type="ChEBI" id="CHEBI:58349"/>
    </ligand>
</feature>
<feature type="binding site" evidence="1">
    <location>
        <position position="182"/>
    </location>
    <ligand>
        <name>NADP(+)</name>
        <dbReference type="ChEBI" id="CHEBI:58349"/>
    </ligand>
</feature>
<feature type="binding site" evidence="1">
    <location>
        <position position="236"/>
    </location>
    <ligand>
        <name>NADP(+)</name>
        <dbReference type="ChEBI" id="CHEBI:58349"/>
    </ligand>
</feature>
<feature type="glycosylation site" description="N-linked (GlcNAc...) asparagine" evidence="3">
    <location>
        <position position="271"/>
    </location>
</feature>
<evidence type="ECO:0000250" key="1">
    <source>
        <dbReference type="UniProtKB" id="Q8CG76"/>
    </source>
</evidence>
<evidence type="ECO:0000255" key="2"/>
<evidence type="ECO:0000255" key="3">
    <source>
        <dbReference type="PROSITE-ProRule" id="PRU00498"/>
    </source>
</evidence>
<evidence type="ECO:0000269" key="4">
    <source>
    </source>
</evidence>
<evidence type="ECO:0000269" key="5">
    <source>
    </source>
</evidence>
<evidence type="ECO:0000269" key="6">
    <source>
    </source>
</evidence>
<evidence type="ECO:0000269" key="7">
    <source>
    </source>
</evidence>
<evidence type="ECO:0000269" key="8">
    <source>
    </source>
</evidence>
<evidence type="ECO:0000269" key="9">
    <source>
    </source>
</evidence>
<evidence type="ECO:0000269" key="10">
    <source>
    </source>
</evidence>
<evidence type="ECO:0000269" key="11">
    <source>
    </source>
</evidence>
<evidence type="ECO:0000269" key="12">
    <source>
    </source>
</evidence>
<evidence type="ECO:0000269" key="13">
    <source>
    </source>
</evidence>
<evidence type="ECO:0000303" key="14">
    <source>
    </source>
</evidence>
<evidence type="ECO:0000305" key="15"/>
<dbReference type="EC" id="1.-.-.-" evidence="11"/>
<dbReference type="EMBL" id="KF285431">
    <property type="protein sequence ID" value="AHA93896.1"/>
    <property type="molecule type" value="Genomic_DNA"/>
</dbReference>
<dbReference type="EMBL" id="MK764691">
    <property type="protein sequence ID" value="QGA67189.1"/>
    <property type="molecule type" value="Genomic_DNA"/>
</dbReference>
<dbReference type="SMR" id="V5NZC3"/>
<dbReference type="GO" id="GO:0016491">
    <property type="term" value="F:oxidoreductase activity"/>
    <property type="evidence" value="ECO:0007669"/>
    <property type="project" value="UniProtKB-KW"/>
</dbReference>
<dbReference type="GO" id="GO:0031409">
    <property type="term" value="F:pigment binding"/>
    <property type="evidence" value="ECO:0007669"/>
    <property type="project" value="UniProtKB-KW"/>
</dbReference>
<dbReference type="CDD" id="cd19075">
    <property type="entry name" value="AKR_AKR7A1-5"/>
    <property type="match status" value="1"/>
</dbReference>
<dbReference type="Gene3D" id="3.20.20.100">
    <property type="entry name" value="NADP-dependent oxidoreductase domain"/>
    <property type="match status" value="1"/>
</dbReference>
<dbReference type="InterPro" id="IPR050523">
    <property type="entry name" value="AKR_Detox_Biosynth"/>
</dbReference>
<dbReference type="InterPro" id="IPR023210">
    <property type="entry name" value="NADP_OxRdtase_dom"/>
</dbReference>
<dbReference type="InterPro" id="IPR036812">
    <property type="entry name" value="NADP_OxRdtase_dom_sf"/>
</dbReference>
<dbReference type="PANTHER" id="PTHR43364:SF4">
    <property type="entry name" value="NAD(P)-LINKED OXIDOREDUCTASE SUPERFAMILY PROTEIN"/>
    <property type="match status" value="1"/>
</dbReference>
<dbReference type="PANTHER" id="PTHR43364">
    <property type="entry name" value="NADH-SPECIFIC METHYLGLYOXAL REDUCTASE-RELATED"/>
    <property type="match status" value="1"/>
</dbReference>
<dbReference type="Pfam" id="PF00248">
    <property type="entry name" value="Aldo_ket_red"/>
    <property type="match status" value="1"/>
</dbReference>
<dbReference type="SUPFAM" id="SSF51430">
    <property type="entry name" value="NAD(P)-linked oxidoreductase"/>
    <property type="match status" value="1"/>
</dbReference>
<reference key="1">
    <citation type="journal article" date="2014" name="Appl. Microbiol. Biotechnol.">
        <title>MpigE, a gene involved in pigment biosynthesis in Monascus ruber M7.</title>
        <authorList>
            <person name="Liu Q."/>
            <person name="Xie N."/>
            <person name="He Y."/>
            <person name="Wang L."/>
            <person name="Shao Y."/>
            <person name="Zhao H."/>
            <person name="Chen F."/>
        </authorList>
    </citation>
    <scope>NUCLEOTIDE SEQUENCE [GENOMIC DNA]</scope>
    <scope>FUNCTION</scope>
    <scope>DISRUPTION PHENOTYPE</scope>
</reference>
<reference key="2">
    <citation type="submission" date="2019-04" db="EMBL/GenBank/DDBJ databases">
        <authorList>
            <person name="Guo X."/>
            <person name="Chen M."/>
            <person name="Ma X."/>
        </authorList>
    </citation>
    <scope>NUCLEOTIDE SEQUENCE [GENOMIC DNA]</scope>
    <source>
        <strain>CGMCC 3.19587</strain>
    </source>
</reference>
<reference key="3">
    <citation type="journal article" date="1977" name="Plant Physiol.">
        <title>Pigmentation and antibacterial activity of fast neutron- and X-ray-induced strains of Monascus purpureus went.</title>
        <authorList>
            <person name="Wong H.C."/>
            <person name="Bau Y.S."/>
        </authorList>
    </citation>
    <scope>BIOTECHNOLOGY</scope>
</reference>
<reference key="4">
    <citation type="journal article" date="2005" name="Chem. Biodivers.">
        <title>Anti-tumor-initiating effects of monascin, an azaphilonoid pigment from the extract of Monascus pilosus fermented rice (red-mold rice).</title>
        <authorList>
            <person name="Akihisa T."/>
            <person name="Tokuda H."/>
            <person name="Ukiya M."/>
            <person name="Kiyota A."/>
            <person name="Yasukawa K."/>
            <person name="Sakamoto N."/>
            <person name="Kimura Y."/>
            <person name="Suzuki T."/>
            <person name="Takayasu J."/>
            <person name="Nishino H."/>
        </authorList>
    </citation>
    <scope>BIOTECHNOLOGY</scope>
</reference>
<reference key="5">
    <citation type="journal article" date="2006" name="Appl. Microbiol. Biotechnol.">
        <title>In vivo hypolipidemic effects and safety of low dosage Monascus powder in a hamster model of hyperlipidemia.</title>
        <authorList>
            <person name="Lee C.L."/>
            <person name="Tsai T.Y."/>
            <person name="Wang J.J."/>
            <person name="Pan T.M."/>
        </authorList>
    </citation>
    <scope>BIOTECHNOLOGY</scope>
</reference>
<reference key="6">
    <citation type="journal article" date="2010" name="J. Agric. Food Chem.">
        <title>Monascin and ankaflavin act as novel hypolipidemic and high-density lipoprotein cholesterol-raising agents in red mold dioscorea.</title>
        <authorList>
            <person name="Lee C.L."/>
            <person name="Kung Y.H."/>
            <person name="Wu C.L."/>
            <person name="Hsu Y.W."/>
            <person name="Pan T.M."/>
        </authorList>
    </citation>
    <scope>BIOTECHNOLOGY</scope>
</reference>
<reference key="7">
    <citation type="journal article" date="2012" name="Appl. Microbiol. Biotechnol.">
        <title>Development of Monascus fermentation technology for high hypolipidemic effect.</title>
        <authorList>
            <person name="Lee C.L."/>
            <person name="Pan T.M."/>
        </authorList>
    </citation>
    <scope>BIOTECHNOLOGY</scope>
</reference>
<reference key="8">
    <citation type="journal article" date="2016" name="Appl. Microbiol. Biotechnol.">
        <title>Identification and role analysis of an intermediate produced by a polygenic mutant of Monascus pigments cluster in Monascus ruber M7.</title>
        <authorList>
            <person name="Liu J."/>
            <person name="Zhou Y."/>
            <person name="Yi T."/>
            <person name="Zhao M."/>
            <person name="Xie N."/>
            <person name="Lei M."/>
            <person name="Liu Q."/>
            <person name="Shao Y."/>
            <person name="Chen F."/>
        </authorList>
    </citation>
    <scope>FUNCTION</scope>
    <scope>PATHWAY</scope>
</reference>
<reference key="9">
    <citation type="journal article" date="2017" name="Chem. Sci.">
        <title>Orange, red, yellow: biosynthesis of azaphilone pigments in Monascus fungi.</title>
        <authorList>
            <person name="Chen W."/>
            <person name="Chen R."/>
            <person name="Liu Q."/>
            <person name="He Y."/>
            <person name="He K."/>
            <person name="Ding X."/>
            <person name="Kang L."/>
            <person name="Guo X."/>
            <person name="Xie N."/>
            <person name="Zhou Y."/>
            <person name="Lu Y."/>
            <person name="Cox R.J."/>
            <person name="Molnar I."/>
            <person name="Li M."/>
            <person name="Shao Y."/>
            <person name="Chen F."/>
        </authorList>
    </citation>
    <scope>FUNCTION</scope>
    <scope>DISRUPTION PHENOTYPE</scope>
    <scope>CATALYTIC ACTIVITY</scope>
    <scope>PATHWAY</scope>
</reference>
<reference key="10">
    <citation type="journal article" date="2021" name="Front. Microbiol.">
        <title>An integrated approach to determine the boundaries of the azaphilone pigment biosynthetic gene cluster of Monascus ruber M7 gown on potato dextrose agar.</title>
        <authorList>
            <person name="Liu Q."/>
            <person name="Zhong S."/>
            <person name="Wang X."/>
            <person name="Gao S."/>
            <person name="Yang X."/>
            <person name="Chen F."/>
            <person name="Molnar I."/>
        </authorList>
    </citation>
    <scope>FUNCTION</scope>
    <scope>INDUCTION</scope>
</reference>
<reference key="11">
    <citation type="journal article" date="2023" name="Food Res. Intern.">
        <title>Improved natural food colorant production in the filamentous fungus Monascus ruber using CRISPR-based engineering.</title>
        <authorList>
            <person name="Ree Yoon H."/>
            <person name="Han S."/>
            <person name="Chul Shin S."/>
            <person name="Cheong Yeom S."/>
            <person name="Jin Kim H."/>
        </authorList>
    </citation>
    <scope>BIOTECHNOLOGY</scope>
</reference>
<gene>
    <name evidence="14" type="primary">pigE</name>
    <name type="synonym">MPsGeE</name>
</gene>
<protein>
    <recommendedName>
        <fullName evidence="14">Aldo-keto reductase pigE</fullName>
        <ecNumber evidence="11">1.-.-.-</ecNumber>
    </recommendedName>
    <alternativeName>
        <fullName evidence="14">Azaphilone pigments biosynthesis cluster protein E</fullName>
    </alternativeName>
</protein>
<comment type="function">
    <text evidence="9 10 11 12">Aldo-keto reductase; part of the gene cluster that mediates the biosynthesis of azaphilone pigments (MonAzPs), a complex mixture of compounds with a common azaphilone skeleton very widely used as food colorants (PubMed:24162083, PubMed:26946170, PubMed:28959415, PubMed:34220766). Within the pathway, pigE is involved in the dehydration of the C-11 alcohol followed by the reduction of the C6(7) double bond which increases the electrophilicity of the C-5 ketone of the resulting acyl benzopyran and allows the intramolecular Knoevenagel aldol condensation with the C-20 enol of the side chain to yield the characteristic linear tricyclic carbon skeletons of the yellow pigments (PubMed:28959415). The first step of the pathway is performed by the nrPKS pigA that forms the hexaketide precursor from successive condensations of five malonyl-CoA units, with a simple acetyl-CoA starter unit. The role of esterase pigG is not clear, but it may play at most a supplementary role in the formation of the benzaldehyde produced by the pigA nrPKS. This very reactive benzaldehyde is intercepted by the pigC ketoreductase that to provide the first stable enzyme-free MonAzPs intermediate, 6-(4-hydroxy-2-oxopentyl)-3-methyl-2,4-dioxocyclohexane carbaldehyde, also known as M7PKS-1. The FAD-dependent monooxygenase pigN hydroxylates M7PKS-1 at C-4, which triggers the formation of the pyran ring. PigJ, pigK and pigD are involved in the acetylation of the pyran ring. PigJ and pigK form the two subunits of a dedicated fungal FAS that produces the side chain fatty acyl moiety of MonAzPs and pigD transfers the fatty acyl chain to the C-4 alcohol. PigM and pigO are involved in the elimination of the omega-1 alcohol. PigM acts as an O-acetyltransferase that synthesizes the putative O-11 acetyl intermediate whereas pigO eliminates acetic acid to yield an intermediate with a C10(11) double bond. The dehydration of the C-11 alcohol followed by the reduction of the C6(7) double bond by the NAD(P)H-dependent oxidoreductase pigE increases the electrophilicity of the C-5 ketone of the resulting acyl benzopyran. This in turn sets up the C-5 ketone for an intramolecular Knoevenagel aldol condensation with the C-20 enol of the side chain. This condensation affords the characteristic linear tricyclic carbon skeletons of the yellow pigments that serve as the common precursors for the classical yellow pigments monascin and ankaflavin, orange pigments rubopunctatin and monascorubrin, and red pigments ribropunctamine and monascorubramine. The FAD-dependent oxidoreductase pigF is especially invoved in the biosynthesis of orange and red pigments via desaturation of C6(7) (PubMed:28959415).</text>
</comment>
<comment type="pathway">
    <text evidence="10 11">Secondary metabolite biosynthesis.</text>
</comment>
<comment type="induction">
    <text evidence="12">Expression is positively regulated by the azaphilone pigments (MonAzPs) gene cluster-specific transcription regulator pigB.</text>
</comment>
<comment type="disruption phenotype">
    <text evidence="9 11">Mainly produces yellow pigments but does not produce orange or red pigments.</text>
</comment>
<comment type="biotechnology">
    <text evidence="4 5 6 7 8 13">As colorants, MonAzPs are widely used in various food products for centuries (PubMed:37087240). Moreover, MonAzPs also possess wide-ranging biological activities such as antibacterial activity, preventing hypertension, lowering cholesterol levels, causing hypolipidemic effects, and displaying antiobesity and antitumor activities (PubMed:16283302, PubMed:16660141, PubMed:17191930, PubMed:20666456, PubMed:22562164).</text>
</comment>
<comment type="similarity">
    <text evidence="15">Belongs to the aldo/keto reductase family. Aldo/keto reductase 2 subfamily.</text>
</comment>
<proteinExistence type="evidence at protein level"/>